<accession>B7N7V4</accession>
<name>MRAZ_ECOLU</name>
<reference key="1">
    <citation type="journal article" date="2009" name="PLoS Genet.">
        <title>Organised genome dynamics in the Escherichia coli species results in highly diverse adaptive paths.</title>
        <authorList>
            <person name="Touchon M."/>
            <person name="Hoede C."/>
            <person name="Tenaillon O."/>
            <person name="Barbe V."/>
            <person name="Baeriswyl S."/>
            <person name="Bidet P."/>
            <person name="Bingen E."/>
            <person name="Bonacorsi S."/>
            <person name="Bouchier C."/>
            <person name="Bouvet O."/>
            <person name="Calteau A."/>
            <person name="Chiapello H."/>
            <person name="Clermont O."/>
            <person name="Cruveiller S."/>
            <person name="Danchin A."/>
            <person name="Diard M."/>
            <person name="Dossat C."/>
            <person name="Karoui M.E."/>
            <person name="Frapy E."/>
            <person name="Garry L."/>
            <person name="Ghigo J.M."/>
            <person name="Gilles A.M."/>
            <person name="Johnson J."/>
            <person name="Le Bouguenec C."/>
            <person name="Lescat M."/>
            <person name="Mangenot S."/>
            <person name="Martinez-Jehanne V."/>
            <person name="Matic I."/>
            <person name="Nassif X."/>
            <person name="Oztas S."/>
            <person name="Petit M.A."/>
            <person name="Pichon C."/>
            <person name="Rouy Z."/>
            <person name="Ruf C.S."/>
            <person name="Schneider D."/>
            <person name="Tourret J."/>
            <person name="Vacherie B."/>
            <person name="Vallenet D."/>
            <person name="Medigue C."/>
            <person name="Rocha E.P.C."/>
            <person name="Denamur E."/>
        </authorList>
    </citation>
    <scope>NUCLEOTIDE SEQUENCE [LARGE SCALE GENOMIC DNA]</scope>
    <source>
        <strain>UMN026 / ExPEC</strain>
    </source>
</reference>
<keyword id="KW-0963">Cytoplasm</keyword>
<keyword id="KW-0238">DNA-binding</keyword>
<keyword id="KW-0677">Repeat</keyword>
<keyword id="KW-0678">Repressor</keyword>
<keyword id="KW-0804">Transcription</keyword>
<keyword id="KW-0805">Transcription regulation</keyword>
<dbReference type="EMBL" id="CU928163">
    <property type="protein sequence ID" value="CAR11304.1"/>
    <property type="molecule type" value="Genomic_DNA"/>
</dbReference>
<dbReference type="RefSeq" id="WP_001295770.1">
    <property type="nucleotide sequence ID" value="NC_011751.1"/>
</dbReference>
<dbReference type="RefSeq" id="YP_002410860.1">
    <property type="nucleotide sequence ID" value="NC_011751.1"/>
</dbReference>
<dbReference type="SMR" id="B7N7V4"/>
<dbReference type="STRING" id="585056.ECUMN_0081"/>
<dbReference type="GeneID" id="75202102"/>
<dbReference type="KEGG" id="eum:ECUMN_0081"/>
<dbReference type="PATRIC" id="fig|585056.7.peg.272"/>
<dbReference type="HOGENOM" id="CLU_107907_2_0_6"/>
<dbReference type="Proteomes" id="UP000007097">
    <property type="component" value="Chromosome"/>
</dbReference>
<dbReference type="GO" id="GO:0005737">
    <property type="term" value="C:cytoplasm"/>
    <property type="evidence" value="ECO:0007669"/>
    <property type="project" value="UniProtKB-UniRule"/>
</dbReference>
<dbReference type="GO" id="GO:0009295">
    <property type="term" value="C:nucleoid"/>
    <property type="evidence" value="ECO:0007669"/>
    <property type="project" value="UniProtKB-SubCell"/>
</dbReference>
<dbReference type="GO" id="GO:0003700">
    <property type="term" value="F:DNA-binding transcription factor activity"/>
    <property type="evidence" value="ECO:0007669"/>
    <property type="project" value="UniProtKB-UniRule"/>
</dbReference>
<dbReference type="GO" id="GO:0000976">
    <property type="term" value="F:transcription cis-regulatory region binding"/>
    <property type="evidence" value="ECO:0007669"/>
    <property type="project" value="TreeGrafter"/>
</dbReference>
<dbReference type="GO" id="GO:2000143">
    <property type="term" value="P:negative regulation of DNA-templated transcription initiation"/>
    <property type="evidence" value="ECO:0007669"/>
    <property type="project" value="TreeGrafter"/>
</dbReference>
<dbReference type="CDD" id="cd16321">
    <property type="entry name" value="MraZ_C"/>
    <property type="match status" value="1"/>
</dbReference>
<dbReference type="CDD" id="cd16320">
    <property type="entry name" value="MraZ_N"/>
    <property type="match status" value="1"/>
</dbReference>
<dbReference type="FunFam" id="3.40.1550.20:FF:000001">
    <property type="entry name" value="Transcriptional regulator MraZ"/>
    <property type="match status" value="1"/>
</dbReference>
<dbReference type="Gene3D" id="3.40.1550.20">
    <property type="entry name" value="Transcriptional regulator MraZ domain"/>
    <property type="match status" value="1"/>
</dbReference>
<dbReference type="HAMAP" id="MF_01008">
    <property type="entry name" value="MraZ"/>
    <property type="match status" value="1"/>
</dbReference>
<dbReference type="InterPro" id="IPR003444">
    <property type="entry name" value="MraZ"/>
</dbReference>
<dbReference type="InterPro" id="IPR035644">
    <property type="entry name" value="MraZ_C"/>
</dbReference>
<dbReference type="InterPro" id="IPR020603">
    <property type="entry name" value="MraZ_dom"/>
</dbReference>
<dbReference type="InterPro" id="IPR035642">
    <property type="entry name" value="MraZ_N"/>
</dbReference>
<dbReference type="InterPro" id="IPR038619">
    <property type="entry name" value="MraZ_sf"/>
</dbReference>
<dbReference type="InterPro" id="IPR007159">
    <property type="entry name" value="SpoVT-AbrB_dom"/>
</dbReference>
<dbReference type="InterPro" id="IPR037914">
    <property type="entry name" value="SpoVT-AbrB_sf"/>
</dbReference>
<dbReference type="NCBIfam" id="TIGR00242">
    <property type="entry name" value="division/cell wall cluster transcriptional repressor MraZ"/>
    <property type="match status" value="1"/>
</dbReference>
<dbReference type="PANTHER" id="PTHR34701">
    <property type="entry name" value="TRANSCRIPTIONAL REGULATOR MRAZ"/>
    <property type="match status" value="1"/>
</dbReference>
<dbReference type="PANTHER" id="PTHR34701:SF1">
    <property type="entry name" value="TRANSCRIPTIONAL REGULATOR MRAZ"/>
    <property type="match status" value="1"/>
</dbReference>
<dbReference type="Pfam" id="PF02381">
    <property type="entry name" value="MraZ"/>
    <property type="match status" value="2"/>
</dbReference>
<dbReference type="SUPFAM" id="SSF89447">
    <property type="entry name" value="AbrB/MazE/MraZ-like"/>
    <property type="match status" value="1"/>
</dbReference>
<dbReference type="PROSITE" id="PS51740">
    <property type="entry name" value="SPOVT_ABRB"/>
    <property type="match status" value="2"/>
</dbReference>
<proteinExistence type="inferred from homology"/>
<comment type="function">
    <text evidence="1">Negatively regulates its own expression and that of the subsequent genes in the proximal part of the division and cell wall (dcw) gene cluster. Acts by binding directly to DNA. May also regulate the expression of genes outside the dcw cluster.</text>
</comment>
<comment type="subunit">
    <text evidence="1">Forms oligomers.</text>
</comment>
<comment type="subcellular location">
    <subcellularLocation>
        <location evidence="1">Cytoplasm</location>
        <location evidence="1">Nucleoid</location>
    </subcellularLocation>
</comment>
<comment type="similarity">
    <text evidence="1">Belongs to the MraZ family.</text>
</comment>
<sequence>MFRGATLVNLDSKGRLSVPTRYREQLLENAAGQMVCTIDIHHPCLLLYPLPEWEIIEQKLSRLSSMNPVERRVQRLLLGHASECQMDGAGRLLIAPVLRQHAGLTKEVMLVGQFNKFELWDETTWHQQVKEDIDAEQLATGDLSERLQDLSL</sequence>
<evidence type="ECO:0000255" key="1">
    <source>
        <dbReference type="HAMAP-Rule" id="MF_01008"/>
    </source>
</evidence>
<evidence type="ECO:0000255" key="2">
    <source>
        <dbReference type="PROSITE-ProRule" id="PRU01076"/>
    </source>
</evidence>
<gene>
    <name evidence="1" type="primary">mraZ</name>
    <name type="ordered locus">ECUMN_0081</name>
</gene>
<protein>
    <recommendedName>
        <fullName>Transcriptional regulator MraZ</fullName>
    </recommendedName>
</protein>
<feature type="chain" id="PRO_1000134794" description="Transcriptional regulator MraZ">
    <location>
        <begin position="1"/>
        <end position="152"/>
    </location>
</feature>
<feature type="domain" description="SpoVT-AbrB 1" evidence="2">
    <location>
        <begin position="5"/>
        <end position="52"/>
    </location>
</feature>
<feature type="domain" description="SpoVT-AbrB 2" evidence="2">
    <location>
        <begin position="81"/>
        <end position="124"/>
    </location>
</feature>
<organism>
    <name type="scientific">Escherichia coli O17:K52:H18 (strain UMN026 / ExPEC)</name>
    <dbReference type="NCBI Taxonomy" id="585056"/>
    <lineage>
        <taxon>Bacteria</taxon>
        <taxon>Pseudomonadati</taxon>
        <taxon>Pseudomonadota</taxon>
        <taxon>Gammaproteobacteria</taxon>
        <taxon>Enterobacterales</taxon>
        <taxon>Enterobacteriaceae</taxon>
        <taxon>Escherichia</taxon>
    </lineage>
</organism>